<protein>
    <recommendedName>
        <fullName>Transmembrane protein 176A</fullName>
    </recommendedName>
    <alternativeName>
        <fullName>Corpus luteum protein 1</fullName>
    </alternativeName>
</protein>
<accession>Q7YQI4</accession>
<accession>A3KMZ5</accession>
<reference key="1">
    <citation type="submission" date="2003-02" db="EMBL/GenBank/DDBJ databases">
        <title>Characterization of a novel bovine gene expressed in the corpus luteum.</title>
        <authorList>
            <person name="Boensdorff T."/>
            <person name="Lingaas F."/>
            <person name="Roenningen K."/>
            <person name="Farstad W."/>
            <person name="Olsaker I."/>
        </authorList>
    </citation>
    <scope>NUCLEOTIDE SEQUENCE [GENOMIC DNA / MRNA]</scope>
    <source>
        <tissue>Corpus luteum</tissue>
    </source>
</reference>
<reference key="2">
    <citation type="submission" date="2007-02" db="EMBL/GenBank/DDBJ databases">
        <authorList>
            <consortium name="NIH - Mammalian Gene Collection (MGC) project"/>
        </authorList>
    </citation>
    <scope>NUCLEOTIDE SEQUENCE [LARGE SCALE MRNA]</scope>
    <source>
        <strain>Crossbred X Angus</strain>
        <tissue>Ileum</tissue>
    </source>
</reference>
<dbReference type="EMBL" id="AY243098">
    <property type="protein sequence ID" value="AAP46091.1"/>
    <property type="molecule type" value="mRNA"/>
</dbReference>
<dbReference type="EMBL" id="AY243099">
    <property type="protein sequence ID" value="AAP46092.1"/>
    <property type="molecule type" value="Genomic_DNA"/>
</dbReference>
<dbReference type="EMBL" id="BC133443">
    <property type="protein sequence ID" value="AAI33444.1"/>
    <property type="molecule type" value="mRNA"/>
</dbReference>
<dbReference type="RefSeq" id="NP_991348.1">
    <property type="nucleotide sequence ID" value="NM_205779.1"/>
</dbReference>
<dbReference type="FunCoup" id="Q7YQI4">
    <property type="interactions" value="92"/>
</dbReference>
<dbReference type="STRING" id="9913.ENSBTAP00000052604"/>
<dbReference type="PaxDb" id="9913-ENSBTAP00000016021"/>
<dbReference type="GeneID" id="404082"/>
<dbReference type="KEGG" id="bta:404082"/>
<dbReference type="CTD" id="55365"/>
<dbReference type="eggNOG" id="ENOG502SF8T">
    <property type="taxonomic scope" value="Eukaryota"/>
</dbReference>
<dbReference type="HOGENOM" id="CLU_090530_1_0_1"/>
<dbReference type="InParanoid" id="Q7YQI4"/>
<dbReference type="OrthoDB" id="9837693at2759"/>
<dbReference type="TreeFam" id="TF335389"/>
<dbReference type="Proteomes" id="UP000009136">
    <property type="component" value="Unplaced"/>
</dbReference>
<dbReference type="GO" id="GO:0016020">
    <property type="term" value="C:membrane"/>
    <property type="evidence" value="ECO:0007669"/>
    <property type="project" value="UniProtKB-SubCell"/>
</dbReference>
<dbReference type="InterPro" id="IPR007237">
    <property type="entry name" value="CD20-like"/>
</dbReference>
<dbReference type="InterPro" id="IPR009281">
    <property type="entry name" value="TMEM176A/TMEM176B"/>
</dbReference>
<dbReference type="PANTHER" id="PTHR15756">
    <property type="entry name" value="LR8/HCA112"/>
    <property type="match status" value="1"/>
</dbReference>
<dbReference type="PANTHER" id="PTHR15756:SF6">
    <property type="entry name" value="TRANSMEMBRANE PROTEIN 176A"/>
    <property type="match status" value="1"/>
</dbReference>
<dbReference type="Pfam" id="PF04103">
    <property type="entry name" value="CD20"/>
    <property type="match status" value="1"/>
</dbReference>
<organism>
    <name type="scientific">Bos taurus</name>
    <name type="common">Bovine</name>
    <dbReference type="NCBI Taxonomy" id="9913"/>
    <lineage>
        <taxon>Eukaryota</taxon>
        <taxon>Metazoa</taxon>
        <taxon>Chordata</taxon>
        <taxon>Craniata</taxon>
        <taxon>Vertebrata</taxon>
        <taxon>Euteleostomi</taxon>
        <taxon>Mammalia</taxon>
        <taxon>Eutheria</taxon>
        <taxon>Laurasiatheria</taxon>
        <taxon>Artiodactyla</taxon>
        <taxon>Ruminantia</taxon>
        <taxon>Pecora</taxon>
        <taxon>Bovidae</taxon>
        <taxon>Bovinae</taxon>
        <taxon>Bos</taxon>
    </lineage>
</organism>
<sequence length="241" mass="26500">METVDCGEAAPRAPQPASIQVHFHHESGLAKLLLGGCSLLQPLLLPRPRATSRALGRHRLLATSWVMQIVLGLLSGVLGGFLYIFSSTTLRNSGAPIWTGAVAVLAGAVAFIYEKRGGIYWALLRTLLALAAFSTATAATIIGAGRFYEYHFIFYKGICNVSPSWRPTGAPTLSPDLERLQQCTAYVNMLKALFISINAMLLGVWVLLLLASLLPLCLCCWRRYRRKEKRDLPLEETVRSE</sequence>
<name>T176A_BOVIN</name>
<comment type="subunit">
    <text evidence="1">Interacts with MCOLN2.</text>
</comment>
<comment type="subcellular location">
    <subcellularLocation>
        <location evidence="4">Membrane</location>
        <topology evidence="4">Multi-pass membrane protein</topology>
    </subcellularLocation>
</comment>
<comment type="similarity">
    <text evidence="4">Belongs to the TMEM176 family.</text>
</comment>
<gene>
    <name type="primary">TMEM176A</name>
    <name type="synonym">CL1</name>
</gene>
<proteinExistence type="evidence at transcript level"/>
<feature type="chain" id="PRO_0000279871" description="Transmembrane protein 176A">
    <location>
        <begin position="1"/>
        <end position="241"/>
    </location>
</feature>
<feature type="transmembrane region" description="Helical" evidence="3">
    <location>
        <begin position="65"/>
        <end position="85"/>
    </location>
</feature>
<feature type="transmembrane region" description="Helical" evidence="3">
    <location>
        <begin position="93"/>
        <end position="113"/>
    </location>
</feature>
<feature type="transmembrane region" description="Helical" evidence="3">
    <location>
        <begin position="127"/>
        <end position="147"/>
    </location>
</feature>
<feature type="transmembrane region" description="Helical" evidence="3">
    <location>
        <begin position="193"/>
        <end position="213"/>
    </location>
</feature>
<feature type="modified residue" description="Phosphoserine" evidence="2">
    <location>
        <position position="38"/>
    </location>
</feature>
<keyword id="KW-0472">Membrane</keyword>
<keyword id="KW-0597">Phosphoprotein</keyword>
<keyword id="KW-1185">Reference proteome</keyword>
<keyword id="KW-0812">Transmembrane</keyword>
<keyword id="KW-1133">Transmembrane helix</keyword>
<evidence type="ECO:0000250" key="1">
    <source>
        <dbReference type="UniProtKB" id="Q96HP8"/>
    </source>
</evidence>
<evidence type="ECO:0000250" key="2">
    <source>
        <dbReference type="UniProtKB" id="Q9DCS1"/>
    </source>
</evidence>
<evidence type="ECO:0000255" key="3"/>
<evidence type="ECO:0000305" key="4"/>